<sequence length="310" mass="34482">MLTTEKLVETLKLDLIAGEEGLSKPIKNADISRPGLEMAGYFSHYASDRIQLLGTTELSFYNLLPDKDRAGRMRKLCRPETPAIIVTRGLQPPEELVEAAKELNTPLIVAKDATTSLMSRLTTFLEHALAKTTSLHGVLVDVYGVGVLITGDSGIGKSETALELVKRGHRLVADDNVEIRQINKDELIGKPPKLIEHLLEIRGLGIINVMTLFGAGSILTEKRIRLNINLENWNKQKLYDRVGLNEETLSILDTEITKKTIPVRPGRNVAVIIEVAAMNYRLNIMGINTAEEFSERLNEEIIKNSHKSEE</sequence>
<name>HPRK_STAAW</name>
<reference key="1">
    <citation type="journal article" date="2002" name="Lancet">
        <title>Genome and virulence determinants of high virulence community-acquired MRSA.</title>
        <authorList>
            <person name="Baba T."/>
            <person name="Takeuchi F."/>
            <person name="Kuroda M."/>
            <person name="Yuzawa H."/>
            <person name="Aoki K."/>
            <person name="Oguchi A."/>
            <person name="Nagai Y."/>
            <person name="Iwama N."/>
            <person name="Asano K."/>
            <person name="Naimi T."/>
            <person name="Kuroda H."/>
            <person name="Cui L."/>
            <person name="Yamamoto K."/>
            <person name="Hiramatsu K."/>
        </authorList>
    </citation>
    <scope>NUCLEOTIDE SEQUENCE [LARGE SCALE GENOMIC DNA]</scope>
    <source>
        <strain>MW2</strain>
    </source>
</reference>
<dbReference type="EC" id="2.7.11.-" evidence="1"/>
<dbReference type="EC" id="2.7.4.-" evidence="1"/>
<dbReference type="EMBL" id="BA000033">
    <property type="protein sequence ID" value="BAB94587.1"/>
    <property type="molecule type" value="Genomic_DNA"/>
</dbReference>
<dbReference type="PIR" id="A89849">
    <property type="entry name" value="A89849"/>
</dbReference>
<dbReference type="RefSeq" id="WP_000958224.1">
    <property type="nucleotide sequence ID" value="NC_003923.1"/>
</dbReference>
<dbReference type="SMR" id="P60702"/>
<dbReference type="KEGG" id="sam:MW0722"/>
<dbReference type="HOGENOM" id="CLU_052030_0_1_9"/>
<dbReference type="GO" id="GO:0005524">
    <property type="term" value="F:ATP binding"/>
    <property type="evidence" value="ECO:0007669"/>
    <property type="project" value="UniProtKB-UniRule"/>
</dbReference>
<dbReference type="GO" id="GO:0000287">
    <property type="term" value="F:magnesium ion binding"/>
    <property type="evidence" value="ECO:0007669"/>
    <property type="project" value="UniProtKB-UniRule"/>
</dbReference>
<dbReference type="GO" id="GO:0000155">
    <property type="term" value="F:phosphorelay sensor kinase activity"/>
    <property type="evidence" value="ECO:0007669"/>
    <property type="project" value="InterPro"/>
</dbReference>
<dbReference type="GO" id="GO:0004674">
    <property type="term" value="F:protein serine/threonine kinase activity"/>
    <property type="evidence" value="ECO:0007669"/>
    <property type="project" value="UniProtKB-KW"/>
</dbReference>
<dbReference type="GO" id="GO:0004712">
    <property type="term" value="F:protein serine/threonine/tyrosine kinase activity"/>
    <property type="evidence" value="ECO:0007669"/>
    <property type="project" value="UniProtKB-UniRule"/>
</dbReference>
<dbReference type="GO" id="GO:0006109">
    <property type="term" value="P:regulation of carbohydrate metabolic process"/>
    <property type="evidence" value="ECO:0007669"/>
    <property type="project" value="UniProtKB-UniRule"/>
</dbReference>
<dbReference type="CDD" id="cd01918">
    <property type="entry name" value="HprK_C"/>
    <property type="match status" value="1"/>
</dbReference>
<dbReference type="FunFam" id="3.40.1390.20:FF:000002">
    <property type="entry name" value="HPr kinase/phosphorylase"/>
    <property type="match status" value="1"/>
</dbReference>
<dbReference type="FunFam" id="3.40.50.300:FF:000174">
    <property type="entry name" value="HPr kinase/phosphorylase"/>
    <property type="match status" value="1"/>
</dbReference>
<dbReference type="Gene3D" id="3.40.1390.20">
    <property type="entry name" value="HprK N-terminal domain-like"/>
    <property type="match status" value="1"/>
</dbReference>
<dbReference type="Gene3D" id="3.40.50.300">
    <property type="entry name" value="P-loop containing nucleotide triphosphate hydrolases"/>
    <property type="match status" value="1"/>
</dbReference>
<dbReference type="HAMAP" id="MF_01249">
    <property type="entry name" value="HPr_kinase"/>
    <property type="match status" value="1"/>
</dbReference>
<dbReference type="InterPro" id="IPR003755">
    <property type="entry name" value="HPr(Ser)_kin/Pase"/>
</dbReference>
<dbReference type="InterPro" id="IPR011104">
    <property type="entry name" value="Hpr_kin/Pase_C"/>
</dbReference>
<dbReference type="InterPro" id="IPR011126">
    <property type="entry name" value="Hpr_kin/Pase_Hpr_N"/>
</dbReference>
<dbReference type="InterPro" id="IPR027417">
    <property type="entry name" value="P-loop_NTPase"/>
</dbReference>
<dbReference type="InterPro" id="IPR028979">
    <property type="entry name" value="Ser_kin/Pase_Hpr-like_N_sf"/>
</dbReference>
<dbReference type="NCBIfam" id="TIGR00679">
    <property type="entry name" value="hpr-ser"/>
    <property type="match status" value="1"/>
</dbReference>
<dbReference type="PANTHER" id="PTHR30305:SF1">
    <property type="entry name" value="HPR KINASE_PHOSPHORYLASE"/>
    <property type="match status" value="1"/>
</dbReference>
<dbReference type="PANTHER" id="PTHR30305">
    <property type="entry name" value="PROTEIN YJDM-RELATED"/>
    <property type="match status" value="1"/>
</dbReference>
<dbReference type="Pfam" id="PF07475">
    <property type="entry name" value="Hpr_kinase_C"/>
    <property type="match status" value="1"/>
</dbReference>
<dbReference type="Pfam" id="PF02603">
    <property type="entry name" value="Hpr_kinase_N"/>
    <property type="match status" value="1"/>
</dbReference>
<dbReference type="SUPFAM" id="SSF75138">
    <property type="entry name" value="HprK N-terminal domain-like"/>
    <property type="match status" value="1"/>
</dbReference>
<dbReference type="SUPFAM" id="SSF53795">
    <property type="entry name" value="PEP carboxykinase-like"/>
    <property type="match status" value="1"/>
</dbReference>
<comment type="function">
    <text evidence="1">Catalyzes the ATP- as well as the pyrophosphate-dependent phosphorylation of a specific serine residue in HPr, a phosphocarrier protein of the phosphoenolpyruvate-dependent sugar phosphotransferase system (PTS). HprK/P also catalyzes the pyrophosphate-producing, inorganic phosphate-dependent dephosphorylation (phosphorolysis) of seryl-phosphorylated HPr (P-Ser-HPr). The two antagonistic activities of HprK/P are regulated by several intracellular metabolites, which change their concentration in response to the absence or presence of rapidly metabolisable carbon sources (glucose, fructose, etc.) in the growth medium. Therefore, by controlling the phosphorylation state of HPr, HPrK/P is a sensor enzyme that plays a major role in the regulation of carbon metabolism and sugar transport: it mediates carbon catabolite repression (CCR), and regulates PTS-catalyzed carbohydrate uptake and inducer exclusion.</text>
</comment>
<comment type="catalytic activity">
    <reaction evidence="1">
        <text>[HPr protein]-L-serine + ATP = [HPr protein]-O-phospho-L-serine + ADP + H(+)</text>
        <dbReference type="Rhea" id="RHEA:46600"/>
        <dbReference type="Rhea" id="RHEA-COMP:11602"/>
        <dbReference type="Rhea" id="RHEA-COMP:11603"/>
        <dbReference type="ChEBI" id="CHEBI:15378"/>
        <dbReference type="ChEBI" id="CHEBI:29999"/>
        <dbReference type="ChEBI" id="CHEBI:30616"/>
        <dbReference type="ChEBI" id="CHEBI:83421"/>
        <dbReference type="ChEBI" id="CHEBI:456216"/>
    </reaction>
</comment>
<comment type="catalytic activity">
    <reaction evidence="1">
        <text>[HPr protein]-O-phospho-L-serine + phosphate + H(+) = [HPr protein]-L-serine + diphosphate</text>
        <dbReference type="Rhea" id="RHEA:46604"/>
        <dbReference type="Rhea" id="RHEA-COMP:11602"/>
        <dbReference type="Rhea" id="RHEA-COMP:11603"/>
        <dbReference type="ChEBI" id="CHEBI:15378"/>
        <dbReference type="ChEBI" id="CHEBI:29999"/>
        <dbReference type="ChEBI" id="CHEBI:33019"/>
        <dbReference type="ChEBI" id="CHEBI:43474"/>
        <dbReference type="ChEBI" id="CHEBI:83421"/>
    </reaction>
</comment>
<comment type="cofactor">
    <cofactor evidence="1">
        <name>Mg(2+)</name>
        <dbReference type="ChEBI" id="CHEBI:18420"/>
    </cofactor>
</comment>
<comment type="subunit">
    <text evidence="1">Homohexamer.</text>
</comment>
<comment type="domain">
    <text evidence="1">The Walker A ATP-binding motif also binds Pi and PPi.</text>
</comment>
<comment type="miscellaneous">
    <text evidence="1">Both phosphorylation and phosphorolysis are carried out by the same active site and suggest a common mechanism for both reactions.</text>
</comment>
<comment type="similarity">
    <text evidence="1">Belongs to the HPrK/P family.</text>
</comment>
<evidence type="ECO:0000255" key="1">
    <source>
        <dbReference type="HAMAP-Rule" id="MF_01249"/>
    </source>
</evidence>
<feature type="chain" id="PRO_0000058986" description="HPr kinase/phosphorylase">
    <location>
        <begin position="1"/>
        <end position="310"/>
    </location>
</feature>
<feature type="region of interest" description="Important for the catalytic mechanism of both phosphorylation and dephosphorylation" evidence="1">
    <location>
        <begin position="199"/>
        <end position="208"/>
    </location>
</feature>
<feature type="region of interest" description="Important for the catalytic mechanism of dephosphorylation" evidence="1">
    <location>
        <begin position="262"/>
        <end position="267"/>
    </location>
</feature>
<feature type="active site" evidence="1">
    <location>
        <position position="136"/>
    </location>
</feature>
<feature type="active site" evidence="1">
    <location>
        <position position="157"/>
    </location>
</feature>
<feature type="active site" description="Proton acceptor; for phosphorylation activity. Proton donor; for dephosphorylation activity" evidence="1">
    <location>
        <position position="175"/>
    </location>
</feature>
<feature type="active site" evidence="1">
    <location>
        <position position="241"/>
    </location>
</feature>
<feature type="binding site" evidence="1">
    <location>
        <begin position="151"/>
        <end position="158"/>
    </location>
    <ligand>
        <name>ATP</name>
        <dbReference type="ChEBI" id="CHEBI:30616"/>
    </ligand>
</feature>
<feature type="binding site" evidence="1">
    <location>
        <position position="158"/>
    </location>
    <ligand>
        <name>Mg(2+)</name>
        <dbReference type="ChEBI" id="CHEBI:18420"/>
    </ligand>
</feature>
<feature type="binding site" evidence="1">
    <location>
        <position position="200"/>
    </location>
    <ligand>
        <name>Mg(2+)</name>
        <dbReference type="ChEBI" id="CHEBI:18420"/>
    </ligand>
</feature>
<proteinExistence type="inferred from homology"/>
<keyword id="KW-0067">ATP-binding</keyword>
<keyword id="KW-0119">Carbohydrate metabolism</keyword>
<keyword id="KW-0418">Kinase</keyword>
<keyword id="KW-0460">Magnesium</keyword>
<keyword id="KW-0479">Metal-binding</keyword>
<keyword id="KW-0511">Multifunctional enzyme</keyword>
<keyword id="KW-0547">Nucleotide-binding</keyword>
<keyword id="KW-0723">Serine/threonine-protein kinase</keyword>
<keyword id="KW-0808">Transferase</keyword>
<protein>
    <recommendedName>
        <fullName evidence="1">HPr kinase/phosphorylase</fullName>
        <shortName evidence="1">HPrK/P</shortName>
        <ecNumber evidence="1">2.7.11.-</ecNumber>
        <ecNumber evidence="1">2.7.4.-</ecNumber>
    </recommendedName>
    <alternativeName>
        <fullName evidence="1">HPr(Ser) kinase/phosphorylase</fullName>
    </alternativeName>
</protein>
<gene>
    <name evidence="1" type="primary">hprK</name>
    <name type="ordered locus">MW0722</name>
</gene>
<organism>
    <name type="scientific">Staphylococcus aureus (strain MW2)</name>
    <dbReference type="NCBI Taxonomy" id="196620"/>
    <lineage>
        <taxon>Bacteria</taxon>
        <taxon>Bacillati</taxon>
        <taxon>Bacillota</taxon>
        <taxon>Bacilli</taxon>
        <taxon>Bacillales</taxon>
        <taxon>Staphylococcaceae</taxon>
        <taxon>Staphylococcus</taxon>
    </lineage>
</organism>
<accession>P60702</accession>
<accession>Q99VL5</accession>